<dbReference type="EMBL" id="CP001113">
    <property type="protein sequence ID" value="ACF64074.1"/>
    <property type="molecule type" value="Genomic_DNA"/>
</dbReference>
<dbReference type="RefSeq" id="WP_001275409.1">
    <property type="nucleotide sequence ID" value="NZ_CCMR01000001.1"/>
</dbReference>
<dbReference type="SMR" id="B4T381"/>
<dbReference type="KEGG" id="see:SNSL254_A3006"/>
<dbReference type="HOGENOM" id="CLU_114845_0_0_6"/>
<dbReference type="Proteomes" id="UP000008824">
    <property type="component" value="Chromosome"/>
</dbReference>
<dbReference type="GO" id="GO:0010181">
    <property type="term" value="F:FMN binding"/>
    <property type="evidence" value="ECO:0007669"/>
    <property type="project" value="InterPro"/>
</dbReference>
<dbReference type="GO" id="GO:0036211">
    <property type="term" value="P:protein modification process"/>
    <property type="evidence" value="ECO:0007669"/>
    <property type="project" value="InterPro"/>
</dbReference>
<dbReference type="FunFam" id="3.40.50.360:FF:000005">
    <property type="entry name" value="Protein NrdI"/>
    <property type="match status" value="1"/>
</dbReference>
<dbReference type="Gene3D" id="3.40.50.360">
    <property type="match status" value="1"/>
</dbReference>
<dbReference type="HAMAP" id="MF_00128">
    <property type="entry name" value="NrdI"/>
    <property type="match status" value="1"/>
</dbReference>
<dbReference type="InterPro" id="IPR029039">
    <property type="entry name" value="Flavoprotein-like_sf"/>
</dbReference>
<dbReference type="InterPro" id="IPR020852">
    <property type="entry name" value="RNR_Ib_NrdI_bac"/>
</dbReference>
<dbReference type="InterPro" id="IPR004465">
    <property type="entry name" value="RNR_NrdI"/>
</dbReference>
<dbReference type="NCBIfam" id="TIGR00333">
    <property type="entry name" value="nrdI"/>
    <property type="match status" value="1"/>
</dbReference>
<dbReference type="PANTHER" id="PTHR37297">
    <property type="entry name" value="PROTEIN NRDI"/>
    <property type="match status" value="1"/>
</dbReference>
<dbReference type="PANTHER" id="PTHR37297:SF1">
    <property type="entry name" value="PROTEIN NRDI"/>
    <property type="match status" value="1"/>
</dbReference>
<dbReference type="Pfam" id="PF07972">
    <property type="entry name" value="Flavodoxin_NdrI"/>
    <property type="match status" value="1"/>
</dbReference>
<dbReference type="PIRSF" id="PIRSF005087">
    <property type="entry name" value="NrdI"/>
    <property type="match status" value="1"/>
</dbReference>
<dbReference type="SUPFAM" id="SSF52218">
    <property type="entry name" value="Flavoproteins"/>
    <property type="match status" value="1"/>
</dbReference>
<evidence type="ECO:0000255" key="1">
    <source>
        <dbReference type="HAMAP-Rule" id="MF_00128"/>
    </source>
</evidence>
<name>NRDI_SALNS</name>
<proteinExistence type="inferred from homology"/>
<reference key="1">
    <citation type="journal article" date="2011" name="J. Bacteriol.">
        <title>Comparative genomics of 28 Salmonella enterica isolates: evidence for CRISPR-mediated adaptive sublineage evolution.</title>
        <authorList>
            <person name="Fricke W.F."/>
            <person name="Mammel M.K."/>
            <person name="McDermott P.F."/>
            <person name="Tartera C."/>
            <person name="White D.G."/>
            <person name="Leclerc J.E."/>
            <person name="Ravel J."/>
            <person name="Cebula T.A."/>
        </authorList>
    </citation>
    <scope>NUCLEOTIDE SEQUENCE [LARGE SCALE GENOMIC DNA]</scope>
    <source>
        <strain>SL254</strain>
    </source>
</reference>
<accession>B4T381</accession>
<gene>
    <name evidence="1" type="primary">nrdI</name>
    <name type="ordered locus">SNSL254_A3006</name>
</gene>
<feature type="chain" id="PRO_1000095632" description="Protein NrdI">
    <location>
        <begin position="1"/>
        <end position="136"/>
    </location>
</feature>
<comment type="function">
    <text evidence="1">Probably involved in ribonucleotide reductase function.</text>
</comment>
<comment type="similarity">
    <text evidence="1">Belongs to the NrdI family.</text>
</comment>
<sequence length="136" mass="15352">MSALVYFSSSSENTHRFMQRLGLPATRIPLNERERIRVDEPYILVVPSYGGGGMAGAVPRQVIRFLNDEHNRARIRGVIASGNRNFGDAWGCAGDVIAQKCGVPWLYRFELMGTQRDIDNVRKGVNEFWQQLPRSA</sequence>
<organism>
    <name type="scientific">Salmonella newport (strain SL254)</name>
    <dbReference type="NCBI Taxonomy" id="423368"/>
    <lineage>
        <taxon>Bacteria</taxon>
        <taxon>Pseudomonadati</taxon>
        <taxon>Pseudomonadota</taxon>
        <taxon>Gammaproteobacteria</taxon>
        <taxon>Enterobacterales</taxon>
        <taxon>Enterobacteriaceae</taxon>
        <taxon>Salmonella</taxon>
    </lineage>
</organism>
<protein>
    <recommendedName>
        <fullName evidence="1">Protein NrdI</fullName>
    </recommendedName>
</protein>